<comment type="function">
    <text evidence="1">One of several proteins that assist in the late maturation steps of the functional core of the 30S ribosomal subunit. Associates with free 30S ribosomal subunits (but not with 30S subunits that are part of 70S ribosomes or polysomes). Required for efficient processing of 16S rRNA. May interact with the 5'-terminal helix region of 16S rRNA.</text>
</comment>
<comment type="subunit">
    <text evidence="1">Monomer. Binds 30S ribosomal subunits, but not 50S ribosomal subunits or 70S ribosomes.</text>
</comment>
<comment type="subcellular location">
    <subcellularLocation>
        <location evidence="1">Cytoplasm</location>
    </subcellularLocation>
</comment>
<comment type="similarity">
    <text evidence="1">Belongs to the RbfA family.</text>
</comment>
<keyword id="KW-0963">Cytoplasm</keyword>
<keyword id="KW-1185">Reference proteome</keyword>
<keyword id="KW-0690">Ribosome biogenesis</keyword>
<dbReference type="EMBL" id="CP001340">
    <property type="protein sequence ID" value="ACL93503.1"/>
    <property type="molecule type" value="Genomic_DNA"/>
</dbReference>
<dbReference type="RefSeq" id="WP_010917927.1">
    <property type="nucleotide sequence ID" value="NC_011916.1"/>
</dbReference>
<dbReference type="RefSeq" id="YP_002515411.1">
    <property type="nucleotide sequence ID" value="NC_011916.1"/>
</dbReference>
<dbReference type="SMR" id="B8GWZ3"/>
<dbReference type="GeneID" id="7332126"/>
<dbReference type="KEGG" id="ccs:CCNA_00036"/>
<dbReference type="PATRIC" id="fig|565050.3.peg.37"/>
<dbReference type="HOGENOM" id="CLU_089475_1_0_5"/>
<dbReference type="OrthoDB" id="9805051at2"/>
<dbReference type="PhylomeDB" id="B8GWZ3"/>
<dbReference type="Proteomes" id="UP000001364">
    <property type="component" value="Chromosome"/>
</dbReference>
<dbReference type="GO" id="GO:0005829">
    <property type="term" value="C:cytosol"/>
    <property type="evidence" value="ECO:0007669"/>
    <property type="project" value="TreeGrafter"/>
</dbReference>
<dbReference type="GO" id="GO:0043024">
    <property type="term" value="F:ribosomal small subunit binding"/>
    <property type="evidence" value="ECO:0007669"/>
    <property type="project" value="TreeGrafter"/>
</dbReference>
<dbReference type="GO" id="GO:0030490">
    <property type="term" value="P:maturation of SSU-rRNA"/>
    <property type="evidence" value="ECO:0007669"/>
    <property type="project" value="UniProtKB-UniRule"/>
</dbReference>
<dbReference type="Gene3D" id="3.30.300.20">
    <property type="match status" value="1"/>
</dbReference>
<dbReference type="HAMAP" id="MF_00003">
    <property type="entry name" value="RbfA"/>
    <property type="match status" value="1"/>
</dbReference>
<dbReference type="InterPro" id="IPR015946">
    <property type="entry name" value="KH_dom-like_a/b"/>
</dbReference>
<dbReference type="InterPro" id="IPR000238">
    <property type="entry name" value="RbfA"/>
</dbReference>
<dbReference type="InterPro" id="IPR023799">
    <property type="entry name" value="RbfA_dom_sf"/>
</dbReference>
<dbReference type="InterPro" id="IPR020053">
    <property type="entry name" value="Ribosome-bd_factorA_CS"/>
</dbReference>
<dbReference type="NCBIfam" id="NF001802">
    <property type="entry name" value="PRK00521.2-5"/>
    <property type="match status" value="1"/>
</dbReference>
<dbReference type="NCBIfam" id="TIGR00082">
    <property type="entry name" value="rbfA"/>
    <property type="match status" value="1"/>
</dbReference>
<dbReference type="PANTHER" id="PTHR33515">
    <property type="entry name" value="RIBOSOME-BINDING FACTOR A, CHLOROPLASTIC-RELATED"/>
    <property type="match status" value="1"/>
</dbReference>
<dbReference type="PANTHER" id="PTHR33515:SF1">
    <property type="entry name" value="RIBOSOME-BINDING FACTOR A, CHLOROPLASTIC-RELATED"/>
    <property type="match status" value="1"/>
</dbReference>
<dbReference type="Pfam" id="PF02033">
    <property type="entry name" value="RBFA"/>
    <property type="match status" value="1"/>
</dbReference>
<dbReference type="SUPFAM" id="SSF89919">
    <property type="entry name" value="Ribosome-binding factor A, RbfA"/>
    <property type="match status" value="1"/>
</dbReference>
<dbReference type="PROSITE" id="PS01319">
    <property type="entry name" value="RBFA"/>
    <property type="match status" value="1"/>
</dbReference>
<reference key="1">
    <citation type="journal article" date="2010" name="J. Bacteriol.">
        <title>The genetic basis of laboratory adaptation in Caulobacter crescentus.</title>
        <authorList>
            <person name="Marks M.E."/>
            <person name="Castro-Rojas C.M."/>
            <person name="Teiling C."/>
            <person name="Du L."/>
            <person name="Kapatral V."/>
            <person name="Walunas T.L."/>
            <person name="Crosson S."/>
        </authorList>
    </citation>
    <scope>NUCLEOTIDE SEQUENCE [LARGE SCALE GENOMIC DNA]</scope>
    <source>
        <strain>NA1000 / CB15N</strain>
    </source>
</reference>
<accession>B8GWZ3</accession>
<sequence length="149" mass="16794">MKRQSDPKKGALTGPSQRQLRAGELIRHALVEILREEELQDEALQNISVTVSEVRMSPDLKHAICFVEPLGAGLTGQDTTDIIKGLNRVSKFLRGRLGRSIDMKFTPDLKFIHDESFGTAAYMDKLFLDPRVQQDTRRLSDVVDDEDEA</sequence>
<organism>
    <name type="scientific">Caulobacter vibrioides (strain NA1000 / CB15N)</name>
    <name type="common">Caulobacter crescentus</name>
    <dbReference type="NCBI Taxonomy" id="565050"/>
    <lineage>
        <taxon>Bacteria</taxon>
        <taxon>Pseudomonadati</taxon>
        <taxon>Pseudomonadota</taxon>
        <taxon>Alphaproteobacteria</taxon>
        <taxon>Caulobacterales</taxon>
        <taxon>Caulobacteraceae</taxon>
        <taxon>Caulobacter</taxon>
    </lineage>
</organism>
<protein>
    <recommendedName>
        <fullName evidence="1">Ribosome-binding factor A</fullName>
    </recommendedName>
</protein>
<gene>
    <name evidence="1" type="primary">rbfA</name>
    <name type="ordered locus">CCNA_00036</name>
</gene>
<proteinExistence type="inferred from homology"/>
<feature type="chain" id="PRO_1000193239" description="Ribosome-binding factor A">
    <location>
        <begin position="1"/>
        <end position="149"/>
    </location>
</feature>
<name>RBFA_CAUVN</name>
<evidence type="ECO:0000255" key="1">
    <source>
        <dbReference type="HAMAP-Rule" id="MF_00003"/>
    </source>
</evidence>